<reference key="1">
    <citation type="journal article" date="2011" name="Proc. Natl. Acad. Sci. U.S.A.">
        <title>Genomic anatomy of Escherichia coli O157:H7 outbreaks.</title>
        <authorList>
            <person name="Eppinger M."/>
            <person name="Mammel M.K."/>
            <person name="Leclerc J.E."/>
            <person name="Ravel J."/>
            <person name="Cebula T.A."/>
        </authorList>
    </citation>
    <scope>NUCLEOTIDE SEQUENCE [LARGE SCALE GENOMIC DNA]</scope>
    <source>
        <strain>EC4115 / EHEC</strain>
    </source>
</reference>
<accession>B5YTP7</accession>
<name>EFG_ECO5E</name>
<feature type="chain" id="PRO_1000091707" description="Elongation factor G">
    <location>
        <begin position="1"/>
        <end position="704"/>
    </location>
</feature>
<feature type="domain" description="tr-type G">
    <location>
        <begin position="8"/>
        <end position="290"/>
    </location>
</feature>
<feature type="binding site" evidence="2">
    <location>
        <begin position="17"/>
        <end position="24"/>
    </location>
    <ligand>
        <name>GTP</name>
        <dbReference type="ChEBI" id="CHEBI:37565"/>
    </ligand>
</feature>
<feature type="binding site" evidence="2">
    <location>
        <begin position="88"/>
        <end position="92"/>
    </location>
    <ligand>
        <name>GTP</name>
        <dbReference type="ChEBI" id="CHEBI:37565"/>
    </ligand>
</feature>
<feature type="binding site" evidence="2">
    <location>
        <begin position="142"/>
        <end position="145"/>
    </location>
    <ligand>
        <name>GTP</name>
        <dbReference type="ChEBI" id="CHEBI:37565"/>
    </ligand>
</feature>
<feature type="modified residue" description="N6-acetyllysine" evidence="1">
    <location>
        <position position="504"/>
    </location>
</feature>
<feature type="modified residue" description="N6-acetyllysine" evidence="1">
    <location>
        <position position="643"/>
    </location>
</feature>
<comment type="function">
    <text evidence="2">Catalyzes the GTP-dependent ribosomal translocation step during translation elongation. During this step, the ribosome changes from the pre-translocational (PRE) to the post-translocational (POST) state as the newly formed A-site-bound peptidyl-tRNA and P-site-bound deacylated tRNA move to the P and E sites, respectively. Catalyzes the coordinated movement of the two tRNA molecules, the mRNA and conformational changes in the ribosome.</text>
</comment>
<comment type="subcellular location">
    <subcellularLocation>
        <location evidence="2">Cytoplasm</location>
    </subcellularLocation>
</comment>
<comment type="similarity">
    <text evidence="2">Belongs to the TRAFAC class translation factor GTPase superfamily. Classic translation factor GTPase family. EF-G/EF-2 subfamily.</text>
</comment>
<organism>
    <name type="scientific">Escherichia coli O157:H7 (strain EC4115 / EHEC)</name>
    <dbReference type="NCBI Taxonomy" id="444450"/>
    <lineage>
        <taxon>Bacteria</taxon>
        <taxon>Pseudomonadati</taxon>
        <taxon>Pseudomonadota</taxon>
        <taxon>Gammaproteobacteria</taxon>
        <taxon>Enterobacterales</taxon>
        <taxon>Enterobacteriaceae</taxon>
        <taxon>Escherichia</taxon>
    </lineage>
</organism>
<proteinExistence type="inferred from homology"/>
<gene>
    <name evidence="2" type="primary">fusA</name>
    <name type="ordered locus">ECH74115_4649</name>
</gene>
<sequence>MARTTPIARYRNIGISAHIDAGKTTTTERILFYTGVNHKIGEVHDGAATMDWMEQEQERGITITSAATTAFWSGMAKQYEPHRINIIDTPGHVDFTIEVERSMRVLDGAVMVYCAVGGVQPQSETVWRQANKYKVPRIAFVNKMDRMGANFLKVVNQIKTRLGANPVPLQLAIGAEEHFTGVVDLVKMKAINWNDADQGVTFEYEDIPADMVELANEWHQNLIESAAEASEELMEKYLGGEELTEAEIKGALRQRVLNNEIILVTCGSAFKNKGVQAMLDAVIDYLPSPVDVPAINGILDDGKDTPAERHASDDEPFSALAFKIATDPFVGNLTFFRVYSGVVNSGDTVLNSVKAARERFGRIVQMHANKREEIKEVRAGDIAAAIGLKDVTTGDTLCDPDAPIILERMEFPEPVISIAVEPKTKADQEKMGLALGRLAKEDPSFRVWTDEESNQTIIAGMGELHLDIIVDRMKREFNVEANVGKPQVAYRETIRQKVTDVEGKHAKQSGGRGQYGHVVIDMYPLEPGSNPKGYEFINDIKGGVIPGEYIPAVDKGIQEQLKAGPLAGYPVVDMGIRLHFGSYHDVDSSELAFKLAASIAFKEGFKKAKPVLLEPIMKVEVETPEENTGDVIGDLSRRRGMLKGQESEVTGVKIHAEVPLSEMFGYATQLRSLTKGRASYTMEFLKYDEAPSNVAQAVIEARGK</sequence>
<evidence type="ECO:0000250" key="1"/>
<evidence type="ECO:0000255" key="2">
    <source>
        <dbReference type="HAMAP-Rule" id="MF_00054"/>
    </source>
</evidence>
<keyword id="KW-0007">Acetylation</keyword>
<keyword id="KW-0963">Cytoplasm</keyword>
<keyword id="KW-0251">Elongation factor</keyword>
<keyword id="KW-0342">GTP-binding</keyword>
<keyword id="KW-0547">Nucleotide-binding</keyword>
<keyword id="KW-0648">Protein biosynthesis</keyword>
<dbReference type="EMBL" id="CP001164">
    <property type="protein sequence ID" value="ACI35843.1"/>
    <property type="molecule type" value="Genomic_DNA"/>
</dbReference>
<dbReference type="RefSeq" id="WP_000124700.1">
    <property type="nucleotide sequence ID" value="NC_011353.1"/>
</dbReference>
<dbReference type="SMR" id="B5YTP7"/>
<dbReference type="GeneID" id="93778658"/>
<dbReference type="KEGG" id="ecf:ECH74115_4649"/>
<dbReference type="HOGENOM" id="CLU_002794_4_1_6"/>
<dbReference type="GO" id="GO:0005737">
    <property type="term" value="C:cytoplasm"/>
    <property type="evidence" value="ECO:0007669"/>
    <property type="project" value="UniProtKB-SubCell"/>
</dbReference>
<dbReference type="GO" id="GO:0005525">
    <property type="term" value="F:GTP binding"/>
    <property type="evidence" value="ECO:0007669"/>
    <property type="project" value="UniProtKB-UniRule"/>
</dbReference>
<dbReference type="GO" id="GO:0003924">
    <property type="term" value="F:GTPase activity"/>
    <property type="evidence" value="ECO:0007669"/>
    <property type="project" value="InterPro"/>
</dbReference>
<dbReference type="GO" id="GO:0097216">
    <property type="term" value="F:guanosine tetraphosphate binding"/>
    <property type="evidence" value="ECO:0007669"/>
    <property type="project" value="UniProtKB-ARBA"/>
</dbReference>
<dbReference type="GO" id="GO:0003746">
    <property type="term" value="F:translation elongation factor activity"/>
    <property type="evidence" value="ECO:0007669"/>
    <property type="project" value="UniProtKB-UniRule"/>
</dbReference>
<dbReference type="GO" id="GO:0032790">
    <property type="term" value="P:ribosome disassembly"/>
    <property type="evidence" value="ECO:0007669"/>
    <property type="project" value="TreeGrafter"/>
</dbReference>
<dbReference type="CDD" id="cd01886">
    <property type="entry name" value="EF-G"/>
    <property type="match status" value="1"/>
</dbReference>
<dbReference type="CDD" id="cd16262">
    <property type="entry name" value="EFG_III"/>
    <property type="match status" value="1"/>
</dbReference>
<dbReference type="CDD" id="cd01434">
    <property type="entry name" value="EFG_mtEFG1_IV"/>
    <property type="match status" value="1"/>
</dbReference>
<dbReference type="CDD" id="cd03713">
    <property type="entry name" value="EFG_mtEFG_C"/>
    <property type="match status" value="1"/>
</dbReference>
<dbReference type="CDD" id="cd04088">
    <property type="entry name" value="EFG_mtEFG_II"/>
    <property type="match status" value="1"/>
</dbReference>
<dbReference type="FunFam" id="2.40.30.10:FF:000006">
    <property type="entry name" value="Elongation factor G"/>
    <property type="match status" value="1"/>
</dbReference>
<dbReference type="FunFam" id="3.30.230.10:FF:000003">
    <property type="entry name" value="Elongation factor G"/>
    <property type="match status" value="1"/>
</dbReference>
<dbReference type="FunFam" id="3.30.70.240:FF:000001">
    <property type="entry name" value="Elongation factor G"/>
    <property type="match status" value="1"/>
</dbReference>
<dbReference type="FunFam" id="3.30.70.870:FF:000001">
    <property type="entry name" value="Elongation factor G"/>
    <property type="match status" value="1"/>
</dbReference>
<dbReference type="FunFam" id="3.40.50.300:FF:000029">
    <property type="entry name" value="Elongation factor G"/>
    <property type="match status" value="1"/>
</dbReference>
<dbReference type="Gene3D" id="3.30.230.10">
    <property type="match status" value="1"/>
</dbReference>
<dbReference type="Gene3D" id="3.30.70.240">
    <property type="match status" value="1"/>
</dbReference>
<dbReference type="Gene3D" id="3.30.70.870">
    <property type="entry name" value="Elongation Factor G (Translational Gtpase), domain 3"/>
    <property type="match status" value="1"/>
</dbReference>
<dbReference type="Gene3D" id="3.40.50.300">
    <property type="entry name" value="P-loop containing nucleotide triphosphate hydrolases"/>
    <property type="match status" value="1"/>
</dbReference>
<dbReference type="Gene3D" id="2.40.30.10">
    <property type="entry name" value="Translation factors"/>
    <property type="match status" value="1"/>
</dbReference>
<dbReference type="HAMAP" id="MF_00054_B">
    <property type="entry name" value="EF_G_EF_2_B"/>
    <property type="match status" value="1"/>
</dbReference>
<dbReference type="InterPro" id="IPR041095">
    <property type="entry name" value="EFG_II"/>
</dbReference>
<dbReference type="InterPro" id="IPR009022">
    <property type="entry name" value="EFG_III"/>
</dbReference>
<dbReference type="InterPro" id="IPR035647">
    <property type="entry name" value="EFG_III/V"/>
</dbReference>
<dbReference type="InterPro" id="IPR047872">
    <property type="entry name" value="EFG_IV"/>
</dbReference>
<dbReference type="InterPro" id="IPR035649">
    <property type="entry name" value="EFG_V"/>
</dbReference>
<dbReference type="InterPro" id="IPR000640">
    <property type="entry name" value="EFG_V-like"/>
</dbReference>
<dbReference type="InterPro" id="IPR004161">
    <property type="entry name" value="EFTu-like_2"/>
</dbReference>
<dbReference type="InterPro" id="IPR031157">
    <property type="entry name" value="G_TR_CS"/>
</dbReference>
<dbReference type="InterPro" id="IPR027417">
    <property type="entry name" value="P-loop_NTPase"/>
</dbReference>
<dbReference type="InterPro" id="IPR020568">
    <property type="entry name" value="Ribosomal_Su5_D2-typ_SF"/>
</dbReference>
<dbReference type="InterPro" id="IPR014721">
    <property type="entry name" value="Ribsml_uS5_D2-typ_fold_subgr"/>
</dbReference>
<dbReference type="InterPro" id="IPR005225">
    <property type="entry name" value="Small_GTP-bd"/>
</dbReference>
<dbReference type="InterPro" id="IPR000795">
    <property type="entry name" value="T_Tr_GTP-bd_dom"/>
</dbReference>
<dbReference type="InterPro" id="IPR009000">
    <property type="entry name" value="Transl_B-barrel_sf"/>
</dbReference>
<dbReference type="InterPro" id="IPR004540">
    <property type="entry name" value="Transl_elong_EFG/EF2"/>
</dbReference>
<dbReference type="InterPro" id="IPR005517">
    <property type="entry name" value="Transl_elong_EFG/EF2_IV"/>
</dbReference>
<dbReference type="NCBIfam" id="TIGR00484">
    <property type="entry name" value="EF-G"/>
    <property type="match status" value="1"/>
</dbReference>
<dbReference type="NCBIfam" id="NF009381">
    <property type="entry name" value="PRK12740.1-5"/>
    <property type="match status" value="1"/>
</dbReference>
<dbReference type="NCBIfam" id="TIGR00231">
    <property type="entry name" value="small_GTP"/>
    <property type="match status" value="1"/>
</dbReference>
<dbReference type="PANTHER" id="PTHR43261:SF1">
    <property type="entry name" value="RIBOSOME-RELEASING FACTOR 2, MITOCHONDRIAL"/>
    <property type="match status" value="1"/>
</dbReference>
<dbReference type="PANTHER" id="PTHR43261">
    <property type="entry name" value="TRANSLATION ELONGATION FACTOR G-RELATED"/>
    <property type="match status" value="1"/>
</dbReference>
<dbReference type="Pfam" id="PF00679">
    <property type="entry name" value="EFG_C"/>
    <property type="match status" value="1"/>
</dbReference>
<dbReference type="Pfam" id="PF14492">
    <property type="entry name" value="EFG_III"/>
    <property type="match status" value="1"/>
</dbReference>
<dbReference type="Pfam" id="PF03764">
    <property type="entry name" value="EFG_IV"/>
    <property type="match status" value="1"/>
</dbReference>
<dbReference type="Pfam" id="PF00009">
    <property type="entry name" value="GTP_EFTU"/>
    <property type="match status" value="1"/>
</dbReference>
<dbReference type="Pfam" id="PF03144">
    <property type="entry name" value="GTP_EFTU_D2"/>
    <property type="match status" value="1"/>
</dbReference>
<dbReference type="PRINTS" id="PR00315">
    <property type="entry name" value="ELONGATNFCT"/>
</dbReference>
<dbReference type="SMART" id="SM00838">
    <property type="entry name" value="EFG_C"/>
    <property type="match status" value="1"/>
</dbReference>
<dbReference type="SMART" id="SM00889">
    <property type="entry name" value="EFG_IV"/>
    <property type="match status" value="1"/>
</dbReference>
<dbReference type="SUPFAM" id="SSF54980">
    <property type="entry name" value="EF-G C-terminal domain-like"/>
    <property type="match status" value="2"/>
</dbReference>
<dbReference type="SUPFAM" id="SSF52540">
    <property type="entry name" value="P-loop containing nucleoside triphosphate hydrolases"/>
    <property type="match status" value="1"/>
</dbReference>
<dbReference type="SUPFAM" id="SSF54211">
    <property type="entry name" value="Ribosomal protein S5 domain 2-like"/>
    <property type="match status" value="1"/>
</dbReference>
<dbReference type="SUPFAM" id="SSF50447">
    <property type="entry name" value="Translation proteins"/>
    <property type="match status" value="1"/>
</dbReference>
<dbReference type="PROSITE" id="PS00301">
    <property type="entry name" value="G_TR_1"/>
    <property type="match status" value="1"/>
</dbReference>
<dbReference type="PROSITE" id="PS51722">
    <property type="entry name" value="G_TR_2"/>
    <property type="match status" value="1"/>
</dbReference>
<protein>
    <recommendedName>
        <fullName evidence="2">Elongation factor G</fullName>
        <shortName evidence="2">EF-G</shortName>
    </recommendedName>
</protein>